<reference key="1">
    <citation type="journal article" date="2009" name="J. Biochem.">
        <title>Structural divergence of cysteine-rich secretory proteins in snake venoms.</title>
        <authorList>
            <person name="Matsunaga Y."/>
            <person name="Yamazaki Y."/>
            <person name="Hyodo F."/>
            <person name="Sugiyama Y."/>
            <person name="Nozaki M."/>
            <person name="Morita T."/>
        </authorList>
    </citation>
    <scope>PROTEIN SEQUENCE</scope>
    <source>
        <tissue>Venom</tissue>
    </source>
</reference>
<name>CRVPA_NAJHA</name>
<organism>
    <name type="scientific">Naja annulifera</name>
    <name type="common">Banded Egyptian cobra</name>
    <name type="synonym">Naja haje annulifera</name>
    <dbReference type="NCBI Taxonomy" id="96794"/>
    <lineage>
        <taxon>Eukaryota</taxon>
        <taxon>Metazoa</taxon>
        <taxon>Chordata</taxon>
        <taxon>Craniata</taxon>
        <taxon>Vertebrata</taxon>
        <taxon>Euteleostomi</taxon>
        <taxon>Lepidosauria</taxon>
        <taxon>Squamata</taxon>
        <taxon>Bifurcata</taxon>
        <taxon>Unidentata</taxon>
        <taxon>Episquamata</taxon>
        <taxon>Toxicofera</taxon>
        <taxon>Serpentes</taxon>
        <taxon>Colubroidea</taxon>
        <taxon>Elapidae</taxon>
        <taxon>Elapinae</taxon>
        <taxon>Naja</taxon>
    </lineage>
</organism>
<feature type="chain" id="PRO_0000422144" description="Cysteine-rich venom protein annuliferin-a">
    <location>
        <begin position="1"/>
        <end position="30" status="greater than"/>
    </location>
</feature>
<feature type="non-terminal residue">
    <location>
        <position position="30"/>
    </location>
</feature>
<keyword id="KW-0108">Calcium channel impairing toxin</keyword>
<keyword id="KW-1221">Calcium-activated potassium channel impairing toxin</keyword>
<keyword id="KW-0903">Direct protein sequencing</keyword>
<keyword id="KW-1015">Disulfide bond</keyword>
<keyword id="KW-0872">Ion channel impairing toxin</keyword>
<keyword id="KW-0632">Potassium channel impairing toxin</keyword>
<keyword id="KW-1219">Ryanodine-sensitive calcium-release channel impairing toxin</keyword>
<keyword id="KW-0964">Secreted</keyword>
<keyword id="KW-0800">Toxin</keyword>
<keyword id="KW-1220">Voltage-gated potassium channel impairing toxin</keyword>
<accession>P0DL14</accession>
<proteinExistence type="evidence at protein level"/>
<comment type="function">
    <text evidence="1">Inhibits calcium-activated potassium channels (KCa), voltage-gated potassium channel (Kv), and the calcium release channel/ryanodine receptor (RyR).</text>
</comment>
<comment type="subcellular location">
    <subcellularLocation>
        <location>Secreted</location>
    </subcellularLocation>
</comment>
<comment type="tissue specificity">
    <text>Expressed by the venom gland.</text>
</comment>
<comment type="PTM">
    <text evidence="1">Contains 8 disulfide bonds.</text>
</comment>
<comment type="similarity">
    <text evidence="2">Belongs to the CRISP family.</text>
</comment>
<dbReference type="GO" id="GO:0005576">
    <property type="term" value="C:extracellular region"/>
    <property type="evidence" value="ECO:0007669"/>
    <property type="project" value="UniProtKB-SubCell"/>
</dbReference>
<dbReference type="GO" id="GO:0005246">
    <property type="term" value="F:calcium channel regulator activity"/>
    <property type="evidence" value="ECO:0007669"/>
    <property type="project" value="UniProtKB-KW"/>
</dbReference>
<dbReference type="GO" id="GO:0015459">
    <property type="term" value="F:potassium channel regulator activity"/>
    <property type="evidence" value="ECO:0007669"/>
    <property type="project" value="UniProtKB-KW"/>
</dbReference>
<dbReference type="GO" id="GO:0090729">
    <property type="term" value="F:toxin activity"/>
    <property type="evidence" value="ECO:0007669"/>
    <property type="project" value="UniProtKB-KW"/>
</dbReference>
<evidence type="ECO:0000250" key="1"/>
<evidence type="ECO:0000305" key="2"/>
<sequence length="30" mass="3649">NVDFNSESTRRKKKQKEIVDLHNXLRRXVD</sequence>
<protein>
    <recommendedName>
        <fullName>Cysteine-rich venom protein annuliferin-a</fullName>
        <shortName>CRVP</shortName>
    </recommendedName>
</protein>